<organism>
    <name type="scientific">Burkholderia mallei (strain SAVP1)</name>
    <dbReference type="NCBI Taxonomy" id="320388"/>
    <lineage>
        <taxon>Bacteria</taxon>
        <taxon>Pseudomonadati</taxon>
        <taxon>Pseudomonadota</taxon>
        <taxon>Betaproteobacteria</taxon>
        <taxon>Burkholderiales</taxon>
        <taxon>Burkholderiaceae</taxon>
        <taxon>Burkholderia</taxon>
        <taxon>pseudomallei group</taxon>
    </lineage>
</organism>
<comment type="function">
    <text evidence="1">One of several proteins that assist in the late maturation steps of the functional core of the 30S ribosomal subunit. Helps release RbfA from mature subunits. May play a role in the assembly of ribosomal proteins into the subunit. Circularly permuted GTPase that catalyzes slow GTP hydrolysis, GTPase activity is stimulated by the 30S ribosomal subunit.</text>
</comment>
<comment type="cofactor">
    <cofactor evidence="1">
        <name>Zn(2+)</name>
        <dbReference type="ChEBI" id="CHEBI:29105"/>
    </cofactor>
    <text evidence="1">Binds 1 zinc ion per subunit.</text>
</comment>
<comment type="subunit">
    <text evidence="1">Monomer. Associates with 30S ribosomal subunit, binds 16S rRNA.</text>
</comment>
<comment type="subcellular location">
    <subcellularLocation>
        <location evidence="1">Cytoplasm</location>
    </subcellularLocation>
</comment>
<comment type="similarity">
    <text evidence="1">Belongs to the TRAFAC class YlqF/YawG GTPase family. RsgA subfamily.</text>
</comment>
<evidence type="ECO:0000255" key="1">
    <source>
        <dbReference type="HAMAP-Rule" id="MF_01820"/>
    </source>
</evidence>
<evidence type="ECO:0000255" key="2">
    <source>
        <dbReference type="PROSITE-ProRule" id="PRU01058"/>
    </source>
</evidence>
<evidence type="ECO:0000256" key="3">
    <source>
        <dbReference type="SAM" id="MobiDB-lite"/>
    </source>
</evidence>
<sequence length="314" mass="34406">MKRAPTKQPAKPAARGGERAQGRVIAAHGRHYIVAPADGGPMLQCFPRRKKSEVAVGDRVAYERTSADQGVIVEIGERRNLLYRSDQFKSKLFAANLDQLLIVLATEPYFSEDLLGRALIAAEANELKPIVVLNKIDVEAALPVARERLAPYRALGYDVLELSVKSAPDDARTQLAPRLAGHSTILLGQSGMGKSTLVNLLVPNAEAATREISAALNSGRHTTTFTRLYPLQDGGALIDSPGFQEFGLYHLTEGRLERAFPEFRPLLAHCRFYNCHHLHEPGCAILEALADGRIAPTRHALYAQLVHEASQIVR</sequence>
<reference key="1">
    <citation type="journal article" date="2010" name="Genome Biol. Evol.">
        <title>Continuing evolution of Burkholderia mallei through genome reduction and large-scale rearrangements.</title>
        <authorList>
            <person name="Losada L."/>
            <person name="Ronning C.M."/>
            <person name="DeShazer D."/>
            <person name="Woods D."/>
            <person name="Fedorova N."/>
            <person name="Kim H.S."/>
            <person name="Shabalina S.A."/>
            <person name="Pearson T.R."/>
            <person name="Brinkac L."/>
            <person name="Tan P."/>
            <person name="Nandi T."/>
            <person name="Crabtree J."/>
            <person name="Badger J."/>
            <person name="Beckstrom-Sternberg S."/>
            <person name="Saqib M."/>
            <person name="Schutzer S.E."/>
            <person name="Keim P."/>
            <person name="Nierman W.C."/>
        </authorList>
    </citation>
    <scope>NUCLEOTIDE SEQUENCE [LARGE SCALE GENOMIC DNA]</scope>
    <source>
        <strain>SAVP1</strain>
    </source>
</reference>
<keyword id="KW-0963">Cytoplasm</keyword>
<keyword id="KW-0342">GTP-binding</keyword>
<keyword id="KW-0378">Hydrolase</keyword>
<keyword id="KW-0479">Metal-binding</keyword>
<keyword id="KW-0547">Nucleotide-binding</keyword>
<keyword id="KW-0690">Ribosome biogenesis</keyword>
<keyword id="KW-0694">RNA-binding</keyword>
<keyword id="KW-0699">rRNA-binding</keyword>
<keyword id="KW-0862">Zinc</keyword>
<dbReference type="EC" id="3.6.1.-" evidence="1"/>
<dbReference type="EMBL" id="CP000526">
    <property type="protein sequence ID" value="ABM51142.1"/>
    <property type="molecule type" value="Genomic_DNA"/>
</dbReference>
<dbReference type="RefSeq" id="WP_004189924.1">
    <property type="nucleotide sequence ID" value="NC_008785.1"/>
</dbReference>
<dbReference type="SMR" id="A1V6I6"/>
<dbReference type="GeneID" id="92978166"/>
<dbReference type="KEGG" id="bmv:BMASAVP1_A2537"/>
<dbReference type="HOGENOM" id="CLU_033617_2_0_4"/>
<dbReference type="GO" id="GO:0005737">
    <property type="term" value="C:cytoplasm"/>
    <property type="evidence" value="ECO:0007669"/>
    <property type="project" value="UniProtKB-SubCell"/>
</dbReference>
<dbReference type="GO" id="GO:0005525">
    <property type="term" value="F:GTP binding"/>
    <property type="evidence" value="ECO:0007669"/>
    <property type="project" value="UniProtKB-UniRule"/>
</dbReference>
<dbReference type="GO" id="GO:0003924">
    <property type="term" value="F:GTPase activity"/>
    <property type="evidence" value="ECO:0007669"/>
    <property type="project" value="UniProtKB-UniRule"/>
</dbReference>
<dbReference type="GO" id="GO:0046872">
    <property type="term" value="F:metal ion binding"/>
    <property type="evidence" value="ECO:0007669"/>
    <property type="project" value="UniProtKB-KW"/>
</dbReference>
<dbReference type="GO" id="GO:0019843">
    <property type="term" value="F:rRNA binding"/>
    <property type="evidence" value="ECO:0007669"/>
    <property type="project" value="UniProtKB-KW"/>
</dbReference>
<dbReference type="GO" id="GO:0042274">
    <property type="term" value="P:ribosomal small subunit biogenesis"/>
    <property type="evidence" value="ECO:0007669"/>
    <property type="project" value="UniProtKB-UniRule"/>
</dbReference>
<dbReference type="CDD" id="cd04466">
    <property type="entry name" value="S1_YloQ_GTPase"/>
    <property type="match status" value="1"/>
</dbReference>
<dbReference type="CDD" id="cd01854">
    <property type="entry name" value="YjeQ_EngC"/>
    <property type="match status" value="1"/>
</dbReference>
<dbReference type="Gene3D" id="2.40.50.140">
    <property type="entry name" value="Nucleic acid-binding proteins"/>
    <property type="match status" value="1"/>
</dbReference>
<dbReference type="Gene3D" id="3.40.50.300">
    <property type="entry name" value="P-loop containing nucleotide triphosphate hydrolases"/>
    <property type="match status" value="1"/>
</dbReference>
<dbReference type="Gene3D" id="1.10.40.50">
    <property type="entry name" value="Probable gtpase engc, domain 3"/>
    <property type="match status" value="1"/>
</dbReference>
<dbReference type="HAMAP" id="MF_01820">
    <property type="entry name" value="GTPase_RsgA"/>
    <property type="match status" value="1"/>
</dbReference>
<dbReference type="InterPro" id="IPR030378">
    <property type="entry name" value="G_CP_dom"/>
</dbReference>
<dbReference type="InterPro" id="IPR012340">
    <property type="entry name" value="NA-bd_OB-fold"/>
</dbReference>
<dbReference type="InterPro" id="IPR027417">
    <property type="entry name" value="P-loop_NTPase"/>
</dbReference>
<dbReference type="InterPro" id="IPR004881">
    <property type="entry name" value="Ribosome_biogen_GTPase_RsgA"/>
</dbReference>
<dbReference type="InterPro" id="IPR010914">
    <property type="entry name" value="RsgA_GTPase_dom"/>
</dbReference>
<dbReference type="InterPro" id="IPR031944">
    <property type="entry name" value="RsgA_N"/>
</dbReference>
<dbReference type="NCBIfam" id="TIGR00157">
    <property type="entry name" value="ribosome small subunit-dependent GTPase A"/>
    <property type="match status" value="1"/>
</dbReference>
<dbReference type="PANTHER" id="PTHR32120">
    <property type="entry name" value="SMALL RIBOSOMAL SUBUNIT BIOGENESIS GTPASE RSGA"/>
    <property type="match status" value="1"/>
</dbReference>
<dbReference type="PANTHER" id="PTHR32120:SF11">
    <property type="entry name" value="SMALL RIBOSOMAL SUBUNIT BIOGENESIS GTPASE RSGA 1, MITOCHONDRIAL-RELATED"/>
    <property type="match status" value="1"/>
</dbReference>
<dbReference type="Pfam" id="PF03193">
    <property type="entry name" value="RsgA_GTPase"/>
    <property type="match status" value="1"/>
</dbReference>
<dbReference type="SUPFAM" id="SSF50249">
    <property type="entry name" value="Nucleic acid-binding proteins"/>
    <property type="match status" value="1"/>
</dbReference>
<dbReference type="SUPFAM" id="SSF52540">
    <property type="entry name" value="P-loop containing nucleoside triphosphate hydrolases"/>
    <property type="match status" value="1"/>
</dbReference>
<dbReference type="PROSITE" id="PS50936">
    <property type="entry name" value="ENGC_GTPASE"/>
    <property type="match status" value="1"/>
</dbReference>
<dbReference type="PROSITE" id="PS51721">
    <property type="entry name" value="G_CP"/>
    <property type="match status" value="1"/>
</dbReference>
<accession>A1V6I6</accession>
<protein>
    <recommendedName>
        <fullName evidence="1">Small ribosomal subunit biogenesis GTPase RsgA</fullName>
        <ecNumber evidence="1">3.6.1.-</ecNumber>
    </recommendedName>
</protein>
<name>RSGA_BURMS</name>
<proteinExistence type="inferred from homology"/>
<gene>
    <name evidence="1" type="primary">rsgA</name>
    <name type="ordered locus">BMASAVP1_A2537</name>
</gene>
<feature type="chain" id="PRO_1000216030" description="Small ribosomal subunit biogenesis GTPase RsgA">
    <location>
        <begin position="1"/>
        <end position="314"/>
    </location>
</feature>
<feature type="domain" description="CP-type G" evidence="2">
    <location>
        <begin position="85"/>
        <end position="246"/>
    </location>
</feature>
<feature type="region of interest" description="Disordered" evidence="3">
    <location>
        <begin position="1"/>
        <end position="21"/>
    </location>
</feature>
<feature type="binding site" evidence="1">
    <location>
        <begin position="134"/>
        <end position="137"/>
    </location>
    <ligand>
        <name>GTP</name>
        <dbReference type="ChEBI" id="CHEBI:37565"/>
    </ligand>
</feature>
<feature type="binding site" evidence="1">
    <location>
        <begin position="188"/>
        <end position="196"/>
    </location>
    <ligand>
        <name>GTP</name>
        <dbReference type="ChEBI" id="CHEBI:37565"/>
    </ligand>
</feature>
<feature type="binding site" evidence="1">
    <location>
        <position position="270"/>
    </location>
    <ligand>
        <name>Zn(2+)</name>
        <dbReference type="ChEBI" id="CHEBI:29105"/>
    </ligand>
</feature>
<feature type="binding site" evidence="1">
    <location>
        <position position="275"/>
    </location>
    <ligand>
        <name>Zn(2+)</name>
        <dbReference type="ChEBI" id="CHEBI:29105"/>
    </ligand>
</feature>
<feature type="binding site" evidence="1">
    <location>
        <position position="277"/>
    </location>
    <ligand>
        <name>Zn(2+)</name>
        <dbReference type="ChEBI" id="CHEBI:29105"/>
    </ligand>
</feature>
<feature type="binding site" evidence="1">
    <location>
        <position position="283"/>
    </location>
    <ligand>
        <name>Zn(2+)</name>
        <dbReference type="ChEBI" id="CHEBI:29105"/>
    </ligand>
</feature>